<comment type="function">
    <text evidence="1">Catalyzes the condensation of the acetyl group of acetyl-CoA with 3-methyl-2-oxobutanoate (2-ketoisovalerate) to form 3-carboxy-3-hydroxy-4-methylpentanoate (2-isopropylmalate).</text>
</comment>
<comment type="catalytic activity">
    <reaction evidence="1">
        <text>3-methyl-2-oxobutanoate + acetyl-CoA + H2O = (2S)-2-isopropylmalate + CoA + H(+)</text>
        <dbReference type="Rhea" id="RHEA:21524"/>
        <dbReference type="ChEBI" id="CHEBI:1178"/>
        <dbReference type="ChEBI" id="CHEBI:11851"/>
        <dbReference type="ChEBI" id="CHEBI:15377"/>
        <dbReference type="ChEBI" id="CHEBI:15378"/>
        <dbReference type="ChEBI" id="CHEBI:57287"/>
        <dbReference type="ChEBI" id="CHEBI:57288"/>
        <dbReference type="EC" id="2.3.3.13"/>
    </reaction>
</comment>
<comment type="cofactor">
    <cofactor evidence="1">
        <name>Mg(2+)</name>
        <dbReference type="ChEBI" id="CHEBI:18420"/>
    </cofactor>
</comment>
<comment type="pathway">
    <text evidence="1">Amino-acid biosynthesis; L-leucine biosynthesis; L-leucine from 3-methyl-2-oxobutanoate: step 1/4.</text>
</comment>
<comment type="subunit">
    <text evidence="1">Homodimer.</text>
</comment>
<comment type="subcellular location">
    <subcellularLocation>
        <location evidence="1">Cytoplasm</location>
    </subcellularLocation>
</comment>
<comment type="similarity">
    <text evidence="1">Belongs to the alpha-IPM synthase/homocitrate synthase family. LeuA type 2 subfamily.</text>
</comment>
<feature type="chain" id="PRO_0000406877" description="2-isopropylmalate synthase">
    <location>
        <begin position="1"/>
        <end position="558"/>
    </location>
</feature>
<feature type="domain" description="Pyruvate carboxyltransferase" evidence="1">
    <location>
        <begin position="31"/>
        <end position="305"/>
    </location>
</feature>
<feature type="region of interest" description="Regulatory domain" evidence="1">
    <location>
        <begin position="439"/>
        <end position="558"/>
    </location>
</feature>
<feature type="binding site" evidence="1">
    <location>
        <position position="40"/>
    </location>
    <ligand>
        <name>Mg(2+)</name>
        <dbReference type="ChEBI" id="CHEBI:18420"/>
    </ligand>
</feature>
<feature type="binding site" evidence="1">
    <location>
        <position position="244"/>
    </location>
    <ligand>
        <name>Mg(2+)</name>
        <dbReference type="ChEBI" id="CHEBI:18420"/>
    </ligand>
</feature>
<feature type="binding site" evidence="1">
    <location>
        <position position="246"/>
    </location>
    <ligand>
        <name>Mg(2+)</name>
        <dbReference type="ChEBI" id="CHEBI:18420"/>
    </ligand>
</feature>
<feature type="binding site" evidence="1">
    <location>
        <position position="280"/>
    </location>
    <ligand>
        <name>Mg(2+)</name>
        <dbReference type="ChEBI" id="CHEBI:18420"/>
    </ligand>
</feature>
<reference key="1">
    <citation type="submission" date="2007-06" db="EMBL/GenBank/DDBJ databases">
        <title>Complete sequence of Marinomonas sp. MWYL1.</title>
        <authorList>
            <consortium name="US DOE Joint Genome Institute"/>
            <person name="Copeland A."/>
            <person name="Lucas S."/>
            <person name="Lapidus A."/>
            <person name="Barry K."/>
            <person name="Glavina del Rio T."/>
            <person name="Dalin E."/>
            <person name="Tice H."/>
            <person name="Pitluck S."/>
            <person name="Kiss H."/>
            <person name="Brettin T."/>
            <person name="Bruce D."/>
            <person name="Detter J.C."/>
            <person name="Han C."/>
            <person name="Schmutz J."/>
            <person name="Larimer F."/>
            <person name="Land M."/>
            <person name="Hauser L."/>
            <person name="Kyrpides N."/>
            <person name="Kim E."/>
            <person name="Johnston A.W.B."/>
            <person name="Todd J.D."/>
            <person name="Rogers R."/>
            <person name="Wexler M."/>
            <person name="Bond P.L."/>
            <person name="Li Y."/>
            <person name="Richardson P."/>
        </authorList>
    </citation>
    <scope>NUCLEOTIDE SEQUENCE [LARGE SCALE GENOMIC DNA]</scope>
    <source>
        <strain>MWYL1</strain>
    </source>
</reference>
<accession>A6VSA9</accession>
<name>LEU1_MARMS</name>
<sequence>MLTQPSIKYRPAQIIDFPARTWPSKQLKTPPRWCSTDLRDGNQALANPMDHVKKMAFFKHLIECGFKEIEVAFPAASQTDFDFVRLLIEGKHIPDDVTIQVMTQSRVDLIERTIQSLVGAKKAIVHIYNATAPVFREIVFCQDKPATLELAVQGVKHIRQLCEQYPDTQWTLQYSPETFCFTEPDFALEVCEAAAKTWQPSLERPMILNLPTTVEVNTPNVFADQIEHFITSFSSLENITISVHPHNDRGTGVATAEMAILAGAQRVEGCLFGNGERTGNVDLVTLAMNLYSQGVYPNLDFSDMRRTVELVEECNELPVHPRHPYAGALAFTAFSGSHQDAIKKGFASQKSTSSMIWQIPYLPLDPKDIGCTYEEVIRVNSQSGKSGAAWLLQENHGLFLPRKLQIDFSKKVKNHTDQTGHEMPLADVWRLFRESYRLNPDDKGQMKLMDYRSHSSNGLQEIRATLRYQEKTWQLVGEGKGLLSAMLDALRKRFNWQINISDFHEHTLGQQTKSKAVSYVQIESDQATPSFGVAIDEDSTKASLQALINACHPLYKEA</sequence>
<dbReference type="EC" id="2.3.3.13" evidence="1"/>
<dbReference type="EMBL" id="CP000749">
    <property type="protein sequence ID" value="ABR69338.1"/>
    <property type="molecule type" value="Genomic_DNA"/>
</dbReference>
<dbReference type="SMR" id="A6VSA9"/>
<dbReference type="STRING" id="400668.Mmwyl1_0400"/>
<dbReference type="KEGG" id="mmw:Mmwyl1_0400"/>
<dbReference type="eggNOG" id="COG0119">
    <property type="taxonomic scope" value="Bacteria"/>
</dbReference>
<dbReference type="HOGENOM" id="CLU_004588_3_0_6"/>
<dbReference type="OrthoDB" id="9803573at2"/>
<dbReference type="UniPathway" id="UPA00048">
    <property type="reaction ID" value="UER00070"/>
</dbReference>
<dbReference type="GO" id="GO:0005737">
    <property type="term" value="C:cytoplasm"/>
    <property type="evidence" value="ECO:0007669"/>
    <property type="project" value="UniProtKB-SubCell"/>
</dbReference>
<dbReference type="GO" id="GO:0003852">
    <property type="term" value="F:2-isopropylmalate synthase activity"/>
    <property type="evidence" value="ECO:0007669"/>
    <property type="project" value="UniProtKB-UniRule"/>
</dbReference>
<dbReference type="GO" id="GO:0003985">
    <property type="term" value="F:acetyl-CoA C-acetyltransferase activity"/>
    <property type="evidence" value="ECO:0007669"/>
    <property type="project" value="UniProtKB-UniRule"/>
</dbReference>
<dbReference type="GO" id="GO:0000287">
    <property type="term" value="F:magnesium ion binding"/>
    <property type="evidence" value="ECO:0007669"/>
    <property type="project" value="UniProtKB-UniRule"/>
</dbReference>
<dbReference type="GO" id="GO:0009098">
    <property type="term" value="P:L-leucine biosynthetic process"/>
    <property type="evidence" value="ECO:0007669"/>
    <property type="project" value="UniProtKB-UniRule"/>
</dbReference>
<dbReference type="CDD" id="cd07942">
    <property type="entry name" value="DRE_TIM_LeuA"/>
    <property type="match status" value="1"/>
</dbReference>
<dbReference type="Gene3D" id="3.30.160.270">
    <property type="match status" value="1"/>
</dbReference>
<dbReference type="Gene3D" id="3.20.20.70">
    <property type="entry name" value="Aldolase class I"/>
    <property type="match status" value="1"/>
</dbReference>
<dbReference type="HAMAP" id="MF_00572">
    <property type="entry name" value="LeuA_type2"/>
    <property type="match status" value="1"/>
</dbReference>
<dbReference type="InterPro" id="IPR013709">
    <property type="entry name" value="2-isopropylmalate_synth_dimer"/>
</dbReference>
<dbReference type="InterPro" id="IPR002034">
    <property type="entry name" value="AIPM/Hcit_synth_CS"/>
</dbReference>
<dbReference type="InterPro" id="IPR013785">
    <property type="entry name" value="Aldolase_TIM"/>
</dbReference>
<dbReference type="InterPro" id="IPR005668">
    <property type="entry name" value="IPM_Synthase"/>
</dbReference>
<dbReference type="InterPro" id="IPR054692">
    <property type="entry name" value="LeuA-like_post-cat"/>
</dbReference>
<dbReference type="InterPro" id="IPR036230">
    <property type="entry name" value="LeuA_allosteric_dom_sf"/>
</dbReference>
<dbReference type="InterPro" id="IPR039371">
    <property type="entry name" value="LeuA_N_DRE-TIM"/>
</dbReference>
<dbReference type="InterPro" id="IPR000891">
    <property type="entry name" value="PYR_CT"/>
</dbReference>
<dbReference type="NCBIfam" id="TIGR00970">
    <property type="entry name" value="leuA_yeast"/>
    <property type="match status" value="1"/>
</dbReference>
<dbReference type="NCBIfam" id="NF002991">
    <property type="entry name" value="PRK03739.1"/>
    <property type="match status" value="1"/>
</dbReference>
<dbReference type="PANTHER" id="PTHR46911">
    <property type="match status" value="1"/>
</dbReference>
<dbReference type="PANTHER" id="PTHR46911:SF1">
    <property type="entry name" value="2-ISOPROPYLMALATE SYNTHASE"/>
    <property type="match status" value="1"/>
</dbReference>
<dbReference type="Pfam" id="PF00682">
    <property type="entry name" value="HMGL-like"/>
    <property type="match status" value="1"/>
</dbReference>
<dbReference type="Pfam" id="PF22615">
    <property type="entry name" value="IPMS_D2"/>
    <property type="match status" value="1"/>
</dbReference>
<dbReference type="Pfam" id="PF08502">
    <property type="entry name" value="LeuA_dimer"/>
    <property type="match status" value="1"/>
</dbReference>
<dbReference type="SMART" id="SM00917">
    <property type="entry name" value="LeuA_dimer"/>
    <property type="match status" value="1"/>
</dbReference>
<dbReference type="SUPFAM" id="SSF110921">
    <property type="entry name" value="2-isopropylmalate synthase LeuA, allosteric (dimerisation) domain"/>
    <property type="match status" value="1"/>
</dbReference>
<dbReference type="SUPFAM" id="SSF51569">
    <property type="entry name" value="Aldolase"/>
    <property type="match status" value="1"/>
</dbReference>
<dbReference type="SUPFAM" id="SSF89000">
    <property type="entry name" value="post-HMGL domain-like"/>
    <property type="match status" value="1"/>
</dbReference>
<dbReference type="PROSITE" id="PS00815">
    <property type="entry name" value="AIPM_HOMOCIT_SYNTH_1"/>
    <property type="match status" value="1"/>
</dbReference>
<dbReference type="PROSITE" id="PS00816">
    <property type="entry name" value="AIPM_HOMOCIT_SYNTH_2"/>
    <property type="match status" value="1"/>
</dbReference>
<dbReference type="PROSITE" id="PS50991">
    <property type="entry name" value="PYR_CT"/>
    <property type="match status" value="1"/>
</dbReference>
<evidence type="ECO:0000255" key="1">
    <source>
        <dbReference type="HAMAP-Rule" id="MF_00572"/>
    </source>
</evidence>
<gene>
    <name evidence="1" type="primary">leuA</name>
    <name type="ordered locus">Mmwyl1_0400</name>
</gene>
<organism>
    <name type="scientific">Marinomonas sp. (strain MWYL1)</name>
    <dbReference type="NCBI Taxonomy" id="400668"/>
    <lineage>
        <taxon>Bacteria</taxon>
        <taxon>Pseudomonadati</taxon>
        <taxon>Pseudomonadota</taxon>
        <taxon>Gammaproteobacteria</taxon>
        <taxon>Oceanospirillales</taxon>
        <taxon>Oceanospirillaceae</taxon>
        <taxon>Marinomonas</taxon>
    </lineage>
</organism>
<protein>
    <recommendedName>
        <fullName evidence="1">2-isopropylmalate synthase</fullName>
        <ecNumber evidence="1">2.3.3.13</ecNumber>
    </recommendedName>
    <alternativeName>
        <fullName evidence="1">Alpha-IPM synthase</fullName>
    </alternativeName>
    <alternativeName>
        <fullName evidence="1">Alpha-isopropylmalate synthase</fullName>
    </alternativeName>
</protein>
<proteinExistence type="inferred from homology"/>
<keyword id="KW-0028">Amino-acid biosynthesis</keyword>
<keyword id="KW-0100">Branched-chain amino acid biosynthesis</keyword>
<keyword id="KW-0963">Cytoplasm</keyword>
<keyword id="KW-0432">Leucine biosynthesis</keyword>
<keyword id="KW-0460">Magnesium</keyword>
<keyword id="KW-0479">Metal-binding</keyword>
<keyword id="KW-0808">Transferase</keyword>